<organism>
    <name type="scientific">Homo sapiens</name>
    <name type="common">Human</name>
    <dbReference type="NCBI Taxonomy" id="9606"/>
    <lineage>
        <taxon>Eukaryota</taxon>
        <taxon>Metazoa</taxon>
        <taxon>Chordata</taxon>
        <taxon>Craniata</taxon>
        <taxon>Vertebrata</taxon>
        <taxon>Euteleostomi</taxon>
        <taxon>Mammalia</taxon>
        <taxon>Eutheria</taxon>
        <taxon>Euarchontoglires</taxon>
        <taxon>Primates</taxon>
        <taxon>Haplorrhini</taxon>
        <taxon>Catarrhini</taxon>
        <taxon>Hominidae</taxon>
        <taxon>Homo</taxon>
    </lineage>
</organism>
<evidence type="ECO:0000256" key="1">
    <source>
        <dbReference type="SAM" id="MobiDB-lite"/>
    </source>
</evidence>
<evidence type="ECO:0000269" key="2">
    <source>
    </source>
</evidence>
<evidence type="ECO:0000269" key="3">
    <source>
    </source>
</evidence>
<evidence type="ECO:0000269" key="4">
    <source>
    </source>
</evidence>
<evidence type="ECO:0000269" key="5">
    <source>
    </source>
</evidence>
<evidence type="ECO:0000269" key="6">
    <source>
    </source>
</evidence>
<evidence type="ECO:0000303" key="7">
    <source>
    </source>
</evidence>
<evidence type="ECO:0000305" key="8"/>
<evidence type="ECO:0007744" key="9">
    <source>
    </source>
</evidence>
<evidence type="ECO:0007829" key="10">
    <source>
        <dbReference type="PDB" id="7EMF"/>
    </source>
</evidence>
<comment type="function">
    <text evidence="5">Component of the Mediator complex, a coactivator involved in the regulated transcription of nearly all RNA polymerase II-dependent genes. Mediator functions as a bridge to convey information from gene-specific regulatory proteins to the basal RNA polymerase II transcription machinery. Mediator is recruited to promoters by direct interactions with regulatory proteins and serves as a scaffold for the assembly of a functional preinitiation complex with RNA polymerase II and the general transcription factors.</text>
</comment>
<comment type="subunit">
    <text evidence="2 3 4 6">Component of the Mediator complex, which is composed of MED1, MED4, MED6, MED7, MED8, MED9, MED10, MED11, MED12, MED13, MED13L, MED14, MED15, MED16, MED17, MED18, MED19, MED20, MED21, MED22, MED23, MED24, MED25, MED26, MED27, MED29, MED30, MED31, CCNC, CDK8 and CDC2L6/CDK11. The MED12, MED13, CCNC and CDK8 subunits form a distinct module termed the CDK8 module. Mediator containing the CDK8 module is less active than Mediator lacking this module in supporting transcriptional activation. Individual preparations of the Mediator complex lacking one or more distinct subunits have been variously termed ARC, CRSP, DRIP, PC2, SMCC and TRAP. Associates with the MED18/MED20 heteromer.</text>
</comment>
<comment type="interaction">
    <interactant intactId="EBI-394656">
        <id>Q9NX70</id>
    </interactant>
    <interactant intactId="EBI-11096309">
        <id>Q9NYB9-2</id>
        <label>ABI2</label>
    </interactant>
    <organismsDiffer>false</organismsDiffer>
    <experiments>3</experiments>
</comment>
<comment type="interaction">
    <interactant intactId="EBI-394656">
        <id>Q9NX70</id>
    </interactant>
    <interactant intactId="EBI-742038">
        <id>Q9P2A4</id>
        <label>ABI3</label>
    </interactant>
    <organismsDiffer>false</organismsDiffer>
    <experiments>3</experiments>
</comment>
<comment type="interaction">
    <interactant intactId="EBI-394656">
        <id>Q9NX70</id>
    </interactant>
    <interactant intactId="EBI-1050106">
        <id>O75934</id>
        <label>BCAS2</label>
    </interactant>
    <organismsDiffer>false</organismsDiffer>
    <experiments>3</experiments>
</comment>
<comment type="interaction">
    <interactant intactId="EBI-394656">
        <id>Q9NX70</id>
    </interactant>
    <interactant intactId="EBI-491065">
        <id>Q14232</id>
        <label>EIF2B1</label>
    </interactant>
    <organismsDiffer>false</organismsDiffer>
    <experiments>3</experiments>
</comment>
<comment type="interaction">
    <interactant intactId="EBI-394656">
        <id>Q9NX70</id>
    </interactant>
    <interactant intactId="EBI-394640">
        <id>Q9BUE0</id>
        <label>MED18</label>
    </interactant>
    <organismsDiffer>false</organismsDiffer>
    <experiments>12</experiments>
</comment>
<comment type="interaction">
    <interactant intactId="EBI-394656">
        <id>Q9NX70</id>
    </interactant>
    <interactant intactId="EBI-394430">
        <id>A0JLT2</id>
        <label>MED19</label>
    </interactant>
    <organismsDiffer>false</organismsDiffer>
    <experiments>12</experiments>
</comment>
<comment type="interaction">
    <interactant intactId="EBI-394656">
        <id>Q9NX70</id>
    </interactant>
    <interactant intactId="EBI-394644">
        <id>Q9H944</id>
        <label>MED20</label>
    </interactant>
    <organismsDiffer>false</organismsDiffer>
    <experiments>11</experiments>
</comment>
<comment type="interaction">
    <interactant intactId="EBI-394656">
        <id>Q9NX70</id>
    </interactant>
    <interactant intactId="EBI-394687">
        <id>Q15528</id>
        <label>MED22</label>
    </interactant>
    <organismsDiffer>false</organismsDiffer>
    <experiments>9</experiments>
</comment>
<comment type="interaction">
    <interactant intactId="EBI-394656">
        <id>Q9NX70</id>
    </interactant>
    <interactant intactId="EBI-514199">
        <id>Q9H204</id>
        <label>MED28</label>
    </interactant>
    <organismsDiffer>false</organismsDiffer>
    <experiments>8</experiments>
</comment>
<comment type="interaction">
    <interactant intactId="EBI-394656">
        <id>Q9NX70</id>
    </interactant>
    <interactant intactId="EBI-394624">
        <id>O75586</id>
        <label>MED6</label>
    </interactant>
    <organismsDiffer>false</organismsDiffer>
    <experiments>7</experiments>
</comment>
<comment type="interaction">
    <interactant intactId="EBI-394656">
        <id>Q9NX70</id>
    </interactant>
    <interactant intactId="EBI-1042642">
        <id>Q9H7Z3</id>
        <label>NRDE2</label>
    </interactant>
    <organismsDiffer>false</organismsDiffer>
    <experiments>3</experiments>
</comment>
<comment type="interaction">
    <interactant intactId="EBI-394656">
        <id>Q9NX70</id>
    </interactant>
    <interactant intactId="EBI-10172867">
        <id>A1L4H1</id>
        <label>SSC5D</label>
    </interactant>
    <organismsDiffer>false</organismsDiffer>
    <experiments>3</experiments>
</comment>
<comment type="interaction">
    <interactant intactId="EBI-394656">
        <id>Q9NX70</id>
    </interactant>
    <interactant intactId="EBI-6260909">
        <id>Q9D8C6</id>
        <label>Med11</label>
    </interactant>
    <organismsDiffer>true</organismsDiffer>
    <experiments>2</experiments>
</comment>
<comment type="interaction">
    <interactant intactId="EBI-394656">
        <id>Q9NX70</id>
    </interactant>
    <interactant intactId="EBI-398698">
        <id>Q9R0X0</id>
        <label>Med20</label>
    </interactant>
    <organismsDiffer>true</organismsDiffer>
    <experiments>2</experiments>
</comment>
<comment type="interaction">
    <interactant intactId="EBI-394656">
        <id>Q9NX70</id>
    </interactant>
    <interactant intactId="EBI-309220">
        <id>Q9CQI9</id>
        <label>Med30</label>
    </interactant>
    <organismsDiffer>true</organismsDiffer>
    <experiments>2</experiments>
</comment>
<comment type="interaction">
    <interactant intactId="EBI-394656">
        <id>Q9NX70</id>
    </interactant>
    <interactant intactId="EBI-7990252">
        <id>Q9D7W5</id>
        <label>Med8</label>
    </interactant>
    <organismsDiffer>true</organismsDiffer>
    <experiments>2</experiments>
</comment>
<comment type="subcellular location">
    <subcellularLocation>
        <location evidence="5">Nucleus</location>
    </subcellularLocation>
</comment>
<comment type="alternative products">
    <event type="alternative splicing"/>
    <isoform>
        <id>Q9NX70-1</id>
        <name>1</name>
        <sequence type="displayed"/>
    </isoform>
    <isoform>
        <id>Q9NX70-2</id>
        <name>2</name>
        <sequence type="described" ref="VSP_056133 VSP_056134"/>
    </isoform>
</comment>
<comment type="tissue specificity">
    <text evidence="5">Widely expressed in embryo and adult.</text>
</comment>
<comment type="similarity">
    <text evidence="8">Belongs to the Mediator complex subunit 29 family.</text>
</comment>
<comment type="sequence caution" evidence="8">
    <conflict type="erroneous initiation">
        <sequence resource="EMBL-CDS" id="AAU43732"/>
    </conflict>
</comment>
<accession>Q9NX70</accession>
<accession>B4DNQ6</accession>
<accession>M0R2E4</accession>
<accession>Q5XX09</accession>
<accession>Q9NTF4</accession>
<sequence>MAASQQQASAASSAAGVSGPSSAGGPGPQQQPQPPAQLVGPAQSGLLQQQQQDFDPVQRYKMLIPQLKESLQTLMKVAAQNLIQNTNIDNGQKSSDGPIQRFDKCLEEFYALCDQLELCLRLAHECLSQSCDSAKHSPTLVPTATKPDAVQPDSLPYPQYLAVIKAQISCAKDIHTALLDCANKVTGKTPAPPAGPGGTL</sequence>
<reference key="1">
    <citation type="journal article" date="2004" name="Biochem. Biophys. Res. Commun.">
        <title>IXL, a new subunit of the mammalian Mediator complex, functions as a transcriptional suppressor.</title>
        <authorList>
            <person name="Wang Y."/>
            <person name="Li Y."/>
            <person name="Zeng W."/>
            <person name="Zhu C."/>
            <person name="Xiao J."/>
            <person name="Yuan W."/>
            <person name="Wang Y."/>
            <person name="Cai Z."/>
            <person name="Zhou J."/>
            <person name="Liu M."/>
            <person name="Wu X."/>
        </authorList>
    </citation>
    <scope>NUCLEOTIDE SEQUENCE [MRNA] (ISOFORM 1)</scope>
    <scope>FUNCTION</scope>
    <scope>TISSUE SPECIFICITY</scope>
    <scope>SUBCELLULAR LOCATION</scope>
    <source>
        <tissue>Embryonic heart</tissue>
    </source>
</reference>
<reference key="2">
    <citation type="journal article" date="2004" name="Nat. Genet.">
        <title>Complete sequencing and characterization of 21,243 full-length human cDNAs.</title>
        <authorList>
            <person name="Ota T."/>
            <person name="Suzuki Y."/>
            <person name="Nishikawa T."/>
            <person name="Otsuki T."/>
            <person name="Sugiyama T."/>
            <person name="Irie R."/>
            <person name="Wakamatsu A."/>
            <person name="Hayashi K."/>
            <person name="Sato H."/>
            <person name="Nagai K."/>
            <person name="Kimura K."/>
            <person name="Makita H."/>
            <person name="Sekine M."/>
            <person name="Obayashi M."/>
            <person name="Nishi T."/>
            <person name="Shibahara T."/>
            <person name="Tanaka T."/>
            <person name="Ishii S."/>
            <person name="Yamamoto J."/>
            <person name="Saito K."/>
            <person name="Kawai Y."/>
            <person name="Isono Y."/>
            <person name="Nakamura Y."/>
            <person name="Nagahari K."/>
            <person name="Murakami K."/>
            <person name="Yasuda T."/>
            <person name="Iwayanagi T."/>
            <person name="Wagatsuma M."/>
            <person name="Shiratori A."/>
            <person name="Sudo H."/>
            <person name="Hosoiri T."/>
            <person name="Kaku Y."/>
            <person name="Kodaira H."/>
            <person name="Kondo H."/>
            <person name="Sugawara M."/>
            <person name="Takahashi M."/>
            <person name="Kanda K."/>
            <person name="Yokoi T."/>
            <person name="Furuya T."/>
            <person name="Kikkawa E."/>
            <person name="Omura Y."/>
            <person name="Abe K."/>
            <person name="Kamihara K."/>
            <person name="Katsuta N."/>
            <person name="Sato K."/>
            <person name="Tanikawa M."/>
            <person name="Yamazaki M."/>
            <person name="Ninomiya K."/>
            <person name="Ishibashi T."/>
            <person name="Yamashita H."/>
            <person name="Murakawa K."/>
            <person name="Fujimori K."/>
            <person name="Tanai H."/>
            <person name="Kimata M."/>
            <person name="Watanabe M."/>
            <person name="Hiraoka S."/>
            <person name="Chiba Y."/>
            <person name="Ishida S."/>
            <person name="Ono Y."/>
            <person name="Takiguchi S."/>
            <person name="Watanabe S."/>
            <person name="Yosida M."/>
            <person name="Hotuta T."/>
            <person name="Kusano J."/>
            <person name="Kanehori K."/>
            <person name="Takahashi-Fujii A."/>
            <person name="Hara H."/>
            <person name="Tanase T.-O."/>
            <person name="Nomura Y."/>
            <person name="Togiya S."/>
            <person name="Komai F."/>
            <person name="Hara R."/>
            <person name="Takeuchi K."/>
            <person name="Arita M."/>
            <person name="Imose N."/>
            <person name="Musashino K."/>
            <person name="Yuuki H."/>
            <person name="Oshima A."/>
            <person name="Sasaki N."/>
            <person name="Aotsuka S."/>
            <person name="Yoshikawa Y."/>
            <person name="Matsunawa H."/>
            <person name="Ichihara T."/>
            <person name="Shiohata N."/>
            <person name="Sano S."/>
            <person name="Moriya S."/>
            <person name="Momiyama H."/>
            <person name="Satoh N."/>
            <person name="Takami S."/>
            <person name="Terashima Y."/>
            <person name="Suzuki O."/>
            <person name="Nakagawa S."/>
            <person name="Senoh A."/>
            <person name="Mizoguchi H."/>
            <person name="Goto Y."/>
            <person name="Shimizu F."/>
            <person name="Wakebe H."/>
            <person name="Hishigaki H."/>
            <person name="Watanabe T."/>
            <person name="Sugiyama A."/>
            <person name="Takemoto M."/>
            <person name="Kawakami B."/>
            <person name="Yamazaki M."/>
            <person name="Watanabe K."/>
            <person name="Kumagai A."/>
            <person name="Itakura S."/>
            <person name="Fukuzumi Y."/>
            <person name="Fujimori Y."/>
            <person name="Komiyama M."/>
            <person name="Tashiro H."/>
            <person name="Tanigami A."/>
            <person name="Fujiwara T."/>
            <person name="Ono T."/>
            <person name="Yamada K."/>
            <person name="Fujii Y."/>
            <person name="Ozaki K."/>
            <person name="Hirao M."/>
            <person name="Ohmori Y."/>
            <person name="Kawabata A."/>
            <person name="Hikiji T."/>
            <person name="Kobatake N."/>
            <person name="Inagaki H."/>
            <person name="Ikema Y."/>
            <person name="Okamoto S."/>
            <person name="Okitani R."/>
            <person name="Kawakami T."/>
            <person name="Noguchi S."/>
            <person name="Itoh T."/>
            <person name="Shigeta K."/>
            <person name="Senba T."/>
            <person name="Matsumura K."/>
            <person name="Nakajima Y."/>
            <person name="Mizuno T."/>
            <person name="Morinaga M."/>
            <person name="Sasaki M."/>
            <person name="Togashi T."/>
            <person name="Oyama M."/>
            <person name="Hata H."/>
            <person name="Watanabe M."/>
            <person name="Komatsu T."/>
            <person name="Mizushima-Sugano J."/>
            <person name="Satoh T."/>
            <person name="Shirai Y."/>
            <person name="Takahashi Y."/>
            <person name="Nakagawa K."/>
            <person name="Okumura K."/>
            <person name="Nagase T."/>
            <person name="Nomura N."/>
            <person name="Kikuchi H."/>
            <person name="Masuho Y."/>
            <person name="Yamashita R."/>
            <person name="Nakai K."/>
            <person name="Yada T."/>
            <person name="Nakamura Y."/>
            <person name="Ohara O."/>
            <person name="Isogai T."/>
            <person name="Sugano S."/>
        </authorList>
    </citation>
    <scope>NUCLEOTIDE SEQUENCE [LARGE SCALE MRNA] (ISOFORMS 1 AND 2)</scope>
    <source>
        <tissue>Lung</tissue>
        <tissue>Signet-ring cell carcinoma</tissue>
    </source>
</reference>
<reference key="3">
    <citation type="journal article" date="2007" name="BMC Genomics">
        <title>The full-ORF clone resource of the German cDNA consortium.</title>
        <authorList>
            <person name="Bechtel S."/>
            <person name="Rosenfelder H."/>
            <person name="Duda A."/>
            <person name="Schmidt C.P."/>
            <person name="Ernst U."/>
            <person name="Wellenreuther R."/>
            <person name="Mehrle A."/>
            <person name="Schuster C."/>
            <person name="Bahr A."/>
            <person name="Bloecker H."/>
            <person name="Heubner D."/>
            <person name="Hoerlein A."/>
            <person name="Michel G."/>
            <person name="Wedler H."/>
            <person name="Koehrer K."/>
            <person name="Ottenwaelder B."/>
            <person name="Poustka A."/>
            <person name="Wiemann S."/>
            <person name="Schupp I."/>
        </authorList>
    </citation>
    <scope>NUCLEOTIDE SEQUENCE [LARGE SCALE MRNA] (ISOFORM 1)</scope>
    <source>
        <tissue>Testis</tissue>
    </source>
</reference>
<reference key="4">
    <citation type="journal article" date="2004" name="Nature">
        <title>The DNA sequence and biology of human chromosome 19.</title>
        <authorList>
            <person name="Grimwood J."/>
            <person name="Gordon L.A."/>
            <person name="Olsen A.S."/>
            <person name="Terry A."/>
            <person name="Schmutz J."/>
            <person name="Lamerdin J.E."/>
            <person name="Hellsten U."/>
            <person name="Goodstein D."/>
            <person name="Couronne O."/>
            <person name="Tran-Gyamfi M."/>
            <person name="Aerts A."/>
            <person name="Altherr M."/>
            <person name="Ashworth L."/>
            <person name="Bajorek E."/>
            <person name="Black S."/>
            <person name="Branscomb E."/>
            <person name="Caenepeel S."/>
            <person name="Carrano A.V."/>
            <person name="Caoile C."/>
            <person name="Chan Y.M."/>
            <person name="Christensen M."/>
            <person name="Cleland C.A."/>
            <person name="Copeland A."/>
            <person name="Dalin E."/>
            <person name="Dehal P."/>
            <person name="Denys M."/>
            <person name="Detter J.C."/>
            <person name="Escobar J."/>
            <person name="Flowers D."/>
            <person name="Fotopulos D."/>
            <person name="Garcia C."/>
            <person name="Georgescu A.M."/>
            <person name="Glavina T."/>
            <person name="Gomez M."/>
            <person name="Gonzales E."/>
            <person name="Groza M."/>
            <person name="Hammon N."/>
            <person name="Hawkins T."/>
            <person name="Haydu L."/>
            <person name="Ho I."/>
            <person name="Huang W."/>
            <person name="Israni S."/>
            <person name="Jett J."/>
            <person name="Kadner K."/>
            <person name="Kimball H."/>
            <person name="Kobayashi A."/>
            <person name="Larionov V."/>
            <person name="Leem S.-H."/>
            <person name="Lopez F."/>
            <person name="Lou Y."/>
            <person name="Lowry S."/>
            <person name="Malfatti S."/>
            <person name="Martinez D."/>
            <person name="McCready P.M."/>
            <person name="Medina C."/>
            <person name="Morgan J."/>
            <person name="Nelson K."/>
            <person name="Nolan M."/>
            <person name="Ovcharenko I."/>
            <person name="Pitluck S."/>
            <person name="Pollard M."/>
            <person name="Popkie A.P."/>
            <person name="Predki P."/>
            <person name="Quan G."/>
            <person name="Ramirez L."/>
            <person name="Rash S."/>
            <person name="Retterer J."/>
            <person name="Rodriguez A."/>
            <person name="Rogers S."/>
            <person name="Salamov A."/>
            <person name="Salazar A."/>
            <person name="She X."/>
            <person name="Smith D."/>
            <person name="Slezak T."/>
            <person name="Solovyev V."/>
            <person name="Thayer N."/>
            <person name="Tice H."/>
            <person name="Tsai M."/>
            <person name="Ustaszewska A."/>
            <person name="Vo N."/>
            <person name="Wagner M."/>
            <person name="Wheeler J."/>
            <person name="Wu K."/>
            <person name="Xie G."/>
            <person name="Yang J."/>
            <person name="Dubchak I."/>
            <person name="Furey T.S."/>
            <person name="DeJong P."/>
            <person name="Dickson M."/>
            <person name="Gordon D."/>
            <person name="Eichler E.E."/>
            <person name="Pennacchio L.A."/>
            <person name="Richardson P."/>
            <person name="Stubbs L."/>
            <person name="Rokhsar D.S."/>
            <person name="Myers R.M."/>
            <person name="Rubin E.M."/>
            <person name="Lucas S.M."/>
        </authorList>
    </citation>
    <scope>NUCLEOTIDE SEQUENCE [LARGE SCALE GENOMIC DNA]</scope>
</reference>
<reference key="5">
    <citation type="journal article" date="2004" name="Genome Res.">
        <title>The status, quality, and expansion of the NIH full-length cDNA project: the Mammalian Gene Collection (MGC).</title>
        <authorList>
            <consortium name="The MGC Project Team"/>
        </authorList>
    </citation>
    <scope>NUCLEOTIDE SEQUENCE [LARGE SCALE MRNA] (ISOFORM 1)</scope>
    <source>
        <tissue>Brain</tissue>
    </source>
</reference>
<reference key="6">
    <citation type="journal article" date="2003" name="J. Biol. Chem.">
        <title>A mammalian homolog of Drosophila melanogaster transcriptional coactivator intersex is a subunit of the mammalian Mediator complex.</title>
        <authorList>
            <person name="Sato S."/>
            <person name="Tomomori-Sato C."/>
            <person name="Banks C.A.S."/>
            <person name="Parmely T.J."/>
            <person name="Sorokina I."/>
            <person name="Brower C.S."/>
            <person name="Conaway R.C."/>
            <person name="Conaway J.W."/>
        </authorList>
    </citation>
    <scope>IDENTIFICATION IN THE TRAP/SMCC MEDIATOR COMPLEX</scope>
    <scope>IDENTIFICATION BY MASS SPECTROMETRY</scope>
    <scope>INTERACTION WITH MED18 AND MED20</scope>
</reference>
<reference key="7">
    <citation type="journal article" date="2004" name="J. Biol. Chem.">
        <title>A mammalian mediator subunit that shares properties with Saccharomyces cerevisiae mediator subunit Cse2.</title>
        <authorList>
            <person name="Tomomori-Sato C."/>
            <person name="Sato S."/>
            <person name="Parmely T.J."/>
            <person name="Banks C.A.S."/>
            <person name="Sorokina I."/>
            <person name="Florens L."/>
            <person name="Zybailov B."/>
            <person name="Washburn M.P."/>
            <person name="Brower C.S."/>
            <person name="Conaway R.C."/>
            <person name="Conaway J.W."/>
        </authorList>
    </citation>
    <scope>IDENTIFICATION IN THE TRAP/SMCC MEDIATOR COMPLEX</scope>
</reference>
<reference key="8">
    <citation type="journal article" date="2004" name="Mol. Cell">
        <title>A set of consensus mammalian mediator subunits identified by multidimensional protein identification technology.</title>
        <authorList>
            <person name="Sato S."/>
            <person name="Tomomori-Sato C."/>
            <person name="Parmely T.J."/>
            <person name="Florens L."/>
            <person name="Zybailov B."/>
            <person name="Swanson S.K."/>
            <person name="Banks C.A.S."/>
            <person name="Jin J."/>
            <person name="Cai Y."/>
            <person name="Washburn M.P."/>
            <person name="Conaway J.W."/>
            <person name="Conaway R.C."/>
        </authorList>
    </citation>
    <scope>IDENTIFICATION BY MASS SPECTROMETRY</scope>
    <scope>IDENTIFICATION IN THE MEDIATOR COMPLEX</scope>
</reference>
<reference key="9">
    <citation type="journal article" date="2005" name="Mol. Cell">
        <title>MED1/TRAP220 exists predominantly in a TRAP/Mediator subpopulation enriched in RNA polymerase II and is required for ER-mediated transcription.</title>
        <authorList>
            <person name="Zhang X."/>
            <person name="Krutchinsky A."/>
            <person name="Fukuda A."/>
            <person name="Chen W."/>
            <person name="Yamamura S."/>
            <person name="Chait B.T."/>
            <person name="Roeder R.G."/>
        </authorList>
    </citation>
    <scope>INTERACTION WITH CCNC; MED1; MED12; MED13; MED17; MED20 AND MED21</scope>
    <scope>IDENTIFICATION BY MASS SPECTROMETRY</scope>
    <scope>IDENTIFICATION IN THE MEDIATOR COMPLEX</scope>
    <scope>ASSOCIATION OF THE MEDIATOR COMPLEX WITH RNA POLYMERASE II</scope>
</reference>
<reference key="10">
    <citation type="journal article" date="2009" name="Anal. Chem.">
        <title>Lys-N and trypsin cover complementary parts of the phosphoproteome in a refined SCX-based approach.</title>
        <authorList>
            <person name="Gauci S."/>
            <person name="Helbig A.O."/>
            <person name="Slijper M."/>
            <person name="Krijgsveld J."/>
            <person name="Heck A.J."/>
            <person name="Mohammed S."/>
        </authorList>
    </citation>
    <scope>ACETYLATION [LARGE SCALE ANALYSIS] AT ALA-2</scope>
    <scope>CLEAVAGE OF INITIATOR METHIONINE [LARGE SCALE ANALYSIS]</scope>
    <scope>IDENTIFICATION BY MASS SPECTROMETRY [LARGE SCALE ANALYSIS]</scope>
</reference>
<name>MED29_HUMAN</name>
<proteinExistence type="evidence at protein level"/>
<protein>
    <recommendedName>
        <fullName>Mediator of RNA polymerase II transcription subunit 29</fullName>
    </recommendedName>
    <alternativeName>
        <fullName>Intersex-like protein</fullName>
    </alternativeName>
    <alternativeName>
        <fullName>Mediator complex subunit 29</fullName>
    </alternativeName>
</protein>
<keyword id="KW-0002">3D-structure</keyword>
<keyword id="KW-0007">Acetylation</keyword>
<keyword id="KW-0010">Activator</keyword>
<keyword id="KW-0025">Alternative splicing</keyword>
<keyword id="KW-0539">Nucleus</keyword>
<keyword id="KW-1267">Proteomics identification</keyword>
<keyword id="KW-1185">Reference proteome</keyword>
<keyword id="KW-0804">Transcription</keyword>
<keyword id="KW-0805">Transcription regulation</keyword>
<gene>
    <name type="primary">MED29</name>
    <name type="synonym">IXL</name>
</gene>
<dbReference type="EMBL" id="AY729650">
    <property type="protein sequence ID" value="AAU43732.1"/>
    <property type="status" value="ALT_INIT"/>
    <property type="molecule type" value="mRNA"/>
</dbReference>
<dbReference type="EMBL" id="AK000411">
    <property type="protein sequence ID" value="BAA91147.1"/>
    <property type="molecule type" value="mRNA"/>
</dbReference>
<dbReference type="EMBL" id="AK298014">
    <property type="protein sequence ID" value="BAG60318.1"/>
    <property type="molecule type" value="mRNA"/>
</dbReference>
<dbReference type="EMBL" id="AL137304">
    <property type="protein sequence ID" value="CAB70687.2"/>
    <property type="molecule type" value="mRNA"/>
</dbReference>
<dbReference type="EMBL" id="AC005239">
    <property type="status" value="NOT_ANNOTATED_CDS"/>
    <property type="molecule type" value="Genomic_DNA"/>
</dbReference>
<dbReference type="EMBL" id="AC011500">
    <property type="status" value="NOT_ANNOTATED_CDS"/>
    <property type="molecule type" value="Genomic_DNA"/>
</dbReference>
<dbReference type="EMBL" id="AC104106">
    <property type="status" value="NOT_ANNOTATED_CDS"/>
    <property type="molecule type" value="Genomic_DNA"/>
</dbReference>
<dbReference type="EMBL" id="BC019015">
    <property type="protein sequence ID" value="AAH19015.1"/>
    <property type="molecule type" value="mRNA"/>
</dbReference>
<dbReference type="CCDS" id="CCDS33021.2">
    <molecule id="Q9NX70-1"/>
</dbReference>
<dbReference type="CCDS" id="CCDS92614.1">
    <molecule id="Q9NX70-2"/>
</dbReference>
<dbReference type="PIR" id="T46497">
    <property type="entry name" value="T46497"/>
</dbReference>
<dbReference type="RefSeq" id="NP_001304699.2">
    <molecule id="Q9NX70-2"/>
    <property type="nucleotide sequence ID" value="NM_001317770.3"/>
</dbReference>
<dbReference type="RefSeq" id="NP_060062.2">
    <molecule id="Q9NX70-1"/>
    <property type="nucleotide sequence ID" value="NM_017592.4"/>
</dbReference>
<dbReference type="PDB" id="7EMF">
    <property type="method" value="EM"/>
    <property type="resolution" value="3.50 A"/>
    <property type="chains" value="2=1-200"/>
</dbReference>
<dbReference type="PDB" id="7ENA">
    <property type="method" value="EM"/>
    <property type="resolution" value="4.07 A"/>
    <property type="chains" value="b=1-200"/>
</dbReference>
<dbReference type="PDB" id="7ENC">
    <property type="method" value="EM"/>
    <property type="resolution" value="4.13 A"/>
    <property type="chains" value="b=1-200"/>
</dbReference>
<dbReference type="PDB" id="7ENJ">
    <property type="method" value="EM"/>
    <property type="resolution" value="4.40 A"/>
    <property type="chains" value="2=1-200"/>
</dbReference>
<dbReference type="PDB" id="7LBM">
    <property type="method" value="EM"/>
    <property type="resolution" value="4.80 A"/>
    <property type="chains" value="p=1-200"/>
</dbReference>
<dbReference type="PDB" id="8GXQ">
    <property type="method" value="EM"/>
    <property type="resolution" value="5.04 A"/>
    <property type="chains" value="b=1-200"/>
</dbReference>
<dbReference type="PDB" id="8GXS">
    <property type="method" value="EM"/>
    <property type="resolution" value="4.16 A"/>
    <property type="chains" value="b=1-200"/>
</dbReference>
<dbReference type="PDB" id="8T9D">
    <property type="method" value="EM"/>
    <property type="resolution" value="4.66 A"/>
    <property type="chains" value="X=1-200"/>
</dbReference>
<dbReference type="PDB" id="8TQW">
    <property type="method" value="EM"/>
    <property type="resolution" value="8.20 A"/>
    <property type="chains" value="2=1-200"/>
</dbReference>
<dbReference type="PDB" id="8TRH">
    <property type="method" value="EM"/>
    <property type="resolution" value="3.70 A"/>
    <property type="chains" value="2=1-200"/>
</dbReference>
<dbReference type="PDBsum" id="7EMF"/>
<dbReference type="PDBsum" id="7ENA"/>
<dbReference type="PDBsum" id="7ENC"/>
<dbReference type="PDBsum" id="7ENJ"/>
<dbReference type="PDBsum" id="7LBM"/>
<dbReference type="PDBsum" id="8GXQ"/>
<dbReference type="PDBsum" id="8GXS"/>
<dbReference type="PDBsum" id="8T9D"/>
<dbReference type="PDBsum" id="8TQW"/>
<dbReference type="PDBsum" id="8TRH"/>
<dbReference type="EMDB" id="EMD-23255"/>
<dbReference type="EMDB" id="EMD-31191"/>
<dbReference type="EMDB" id="EMD-31204"/>
<dbReference type="EMDB" id="EMD-31207"/>
<dbReference type="EMDB" id="EMD-31211"/>
<dbReference type="EMDB" id="EMD-34359"/>
<dbReference type="EMDB" id="EMD-34360"/>
<dbReference type="EMDB" id="EMD-41107"/>
<dbReference type="EMDB" id="EMD-41565"/>
<dbReference type="EMDB" id="EMD-41580"/>
<dbReference type="SMR" id="Q9NX70"/>
<dbReference type="BioGRID" id="120734">
    <property type="interactions" value="108"/>
</dbReference>
<dbReference type="ComplexPortal" id="CPX-3227">
    <property type="entry name" value="Core mediator complex"/>
</dbReference>
<dbReference type="CORUM" id="Q9NX70"/>
<dbReference type="FunCoup" id="Q9NX70">
    <property type="interactions" value="3027"/>
</dbReference>
<dbReference type="IntAct" id="Q9NX70">
    <property type="interactions" value="126"/>
</dbReference>
<dbReference type="MINT" id="Q9NX70"/>
<dbReference type="STRING" id="9606.ENSP00000481733"/>
<dbReference type="GlyGen" id="Q9NX70">
    <property type="glycosylation" value="1 site, 1 O-linked glycan (1 site)"/>
</dbReference>
<dbReference type="iPTMnet" id="Q9NX70"/>
<dbReference type="PhosphoSitePlus" id="Q9NX70"/>
<dbReference type="BioMuta" id="MED29"/>
<dbReference type="DMDM" id="74734688"/>
<dbReference type="jPOST" id="Q9NX70"/>
<dbReference type="MassIVE" id="Q9NX70"/>
<dbReference type="PaxDb" id="9606-ENSP00000314343"/>
<dbReference type="PeptideAtlas" id="Q9NX70"/>
<dbReference type="ProteomicsDB" id="83050">
    <molecule id="Q9NX70-1"/>
</dbReference>
<dbReference type="Pumba" id="Q9NX70"/>
<dbReference type="Antibodypedia" id="30311">
    <property type="antibodies" value="60 antibodies from 20 providers"/>
</dbReference>
<dbReference type="DNASU" id="55588"/>
<dbReference type="Ensembl" id="ENST00000315588.11">
    <molecule id="Q9NX70-1"/>
    <property type="protein sequence ID" value="ENSP00000314343.5"/>
    <property type="gene ID" value="ENSG00000063322.15"/>
</dbReference>
<dbReference type="Ensembl" id="ENST00000594368.5">
    <molecule id="Q9NX70-2"/>
    <property type="protein sequence ID" value="ENSP00000472501.2"/>
    <property type="gene ID" value="ENSG00000063322.15"/>
</dbReference>
<dbReference type="GeneID" id="55588"/>
<dbReference type="KEGG" id="hsa:55588"/>
<dbReference type="MANE-Select" id="ENST00000315588.11">
    <property type="protein sequence ID" value="ENSP00000314343.5"/>
    <property type="RefSeq nucleotide sequence ID" value="NM_017592.4"/>
    <property type="RefSeq protein sequence ID" value="NP_060062.2"/>
</dbReference>
<dbReference type="UCSC" id="uc060ykk.1">
    <molecule id="Q9NX70-1"/>
    <property type="organism name" value="human"/>
</dbReference>
<dbReference type="AGR" id="HGNC:23074"/>
<dbReference type="CTD" id="55588"/>
<dbReference type="DisGeNET" id="55588"/>
<dbReference type="GeneCards" id="MED29"/>
<dbReference type="HGNC" id="HGNC:23074">
    <property type="gene designation" value="MED29"/>
</dbReference>
<dbReference type="HPA" id="ENSG00000063322">
    <property type="expression patterns" value="Low tissue specificity"/>
</dbReference>
<dbReference type="MIM" id="612914">
    <property type="type" value="gene"/>
</dbReference>
<dbReference type="neXtProt" id="NX_Q9NX70"/>
<dbReference type="OpenTargets" id="ENSG00000063322"/>
<dbReference type="PharmGKB" id="PA162395655"/>
<dbReference type="VEuPathDB" id="HostDB:ENSG00000063322"/>
<dbReference type="eggNOG" id="ENOG502QRNJ">
    <property type="taxonomic scope" value="Eukaryota"/>
</dbReference>
<dbReference type="GeneTree" id="ENSGT00390000007540"/>
<dbReference type="HOGENOM" id="CLU_1312718_0_0_1"/>
<dbReference type="InParanoid" id="Q9NX70"/>
<dbReference type="OrthoDB" id="6366949at2759"/>
<dbReference type="PAN-GO" id="Q9NX70">
    <property type="GO annotations" value="4 GO annotations based on evolutionary models"/>
</dbReference>
<dbReference type="PhylomeDB" id="Q9NX70"/>
<dbReference type="TreeFam" id="TF326632"/>
<dbReference type="PathwayCommons" id="Q9NX70"/>
<dbReference type="Reactome" id="R-HSA-1989781">
    <property type="pathway name" value="PPARA activates gene expression"/>
</dbReference>
<dbReference type="Reactome" id="R-HSA-381340">
    <property type="pathway name" value="Transcriptional regulation of white adipocyte differentiation"/>
</dbReference>
<dbReference type="Reactome" id="R-HSA-9833110">
    <property type="pathway name" value="RSV-host interactions"/>
</dbReference>
<dbReference type="SignaLink" id="Q9NX70"/>
<dbReference type="SIGNOR" id="Q9NX70"/>
<dbReference type="BioGRID-ORCS" id="55588">
    <property type="hits" value="419 hits in 1166 CRISPR screens"/>
</dbReference>
<dbReference type="ChiTaRS" id="MED29">
    <property type="organism name" value="human"/>
</dbReference>
<dbReference type="GenomeRNAi" id="55588"/>
<dbReference type="Pharos" id="Q9NX70">
    <property type="development level" value="Tbio"/>
</dbReference>
<dbReference type="PRO" id="PR:Q9NX70"/>
<dbReference type="Proteomes" id="UP000005640">
    <property type="component" value="Chromosome 19"/>
</dbReference>
<dbReference type="RNAct" id="Q9NX70">
    <property type="molecule type" value="protein"/>
</dbReference>
<dbReference type="Bgee" id="ENSG00000063322">
    <property type="expression patterns" value="Expressed in prefrontal cortex and 183 other cell types or tissues"/>
</dbReference>
<dbReference type="ExpressionAtlas" id="Q9NX70">
    <property type="expression patterns" value="baseline and differential"/>
</dbReference>
<dbReference type="GO" id="GO:0070847">
    <property type="term" value="C:core mediator complex"/>
    <property type="evidence" value="ECO:0000353"/>
    <property type="project" value="ComplexPortal"/>
</dbReference>
<dbReference type="GO" id="GO:0016592">
    <property type="term" value="C:mediator complex"/>
    <property type="evidence" value="ECO:0000314"/>
    <property type="project" value="MGI"/>
</dbReference>
<dbReference type="GO" id="GO:0005654">
    <property type="term" value="C:nucleoplasm"/>
    <property type="evidence" value="ECO:0000314"/>
    <property type="project" value="HPA"/>
</dbReference>
<dbReference type="GO" id="GO:0005634">
    <property type="term" value="C:nucleus"/>
    <property type="evidence" value="ECO:0000314"/>
    <property type="project" value="ComplexPortal"/>
</dbReference>
<dbReference type="GO" id="GO:0003712">
    <property type="term" value="F:transcription coregulator activity"/>
    <property type="evidence" value="ECO:0000318"/>
    <property type="project" value="GO_Central"/>
</dbReference>
<dbReference type="GO" id="GO:0032968">
    <property type="term" value="P:positive regulation of transcription elongation by RNA polymerase II"/>
    <property type="evidence" value="ECO:0000303"/>
    <property type="project" value="ComplexPortal"/>
</dbReference>
<dbReference type="GO" id="GO:0060261">
    <property type="term" value="P:positive regulation of transcription initiation by RNA polymerase II"/>
    <property type="evidence" value="ECO:0000303"/>
    <property type="project" value="ComplexPortal"/>
</dbReference>
<dbReference type="GO" id="GO:0006357">
    <property type="term" value="P:regulation of transcription by RNA polymerase II"/>
    <property type="evidence" value="ECO:0000318"/>
    <property type="project" value="GO_Central"/>
</dbReference>
<dbReference type="GO" id="GO:0051123">
    <property type="term" value="P:RNA polymerase II preinitiation complex assembly"/>
    <property type="evidence" value="ECO:0000303"/>
    <property type="project" value="ComplexPortal"/>
</dbReference>
<dbReference type="InterPro" id="IPR021018">
    <property type="entry name" value="Mediator_Med29_met"/>
</dbReference>
<dbReference type="PANTHER" id="PTHR28314">
    <property type="entry name" value="MEDIATOR OF RNA POLYMERASE II TRANSCRIPTION SUBUNIT 29"/>
    <property type="match status" value="1"/>
</dbReference>
<dbReference type="PANTHER" id="PTHR28314:SF1">
    <property type="entry name" value="MEDIATOR OF RNA POLYMERASE II TRANSCRIPTION SUBUNIT 29"/>
    <property type="match status" value="1"/>
</dbReference>
<dbReference type="Pfam" id="PF11568">
    <property type="entry name" value="Med29"/>
    <property type="match status" value="1"/>
</dbReference>
<feature type="initiator methionine" description="Removed" evidence="9">
    <location>
        <position position="1"/>
    </location>
</feature>
<feature type="chain" id="PRO_0000288058" description="Mediator of RNA polymerase II transcription subunit 29">
    <location>
        <begin position="2"/>
        <end position="200"/>
    </location>
</feature>
<feature type="region of interest" description="Disordered" evidence="1">
    <location>
        <begin position="1"/>
        <end position="48"/>
    </location>
</feature>
<feature type="compositionally biased region" description="Low complexity" evidence="1">
    <location>
        <begin position="1"/>
        <end position="21"/>
    </location>
</feature>
<feature type="compositionally biased region" description="Low complexity" evidence="1">
    <location>
        <begin position="36"/>
        <end position="48"/>
    </location>
</feature>
<feature type="modified residue" description="N-acetylalanine" evidence="9">
    <location>
        <position position="2"/>
    </location>
</feature>
<feature type="splice variant" id="VSP_056133" description="In isoform 2." evidence="7">
    <original>RLAHECLSQSCDSAKHSPTLVPTATKPDAVQPDSLPYPQYLAVIKAQISCAKDIHTALLDCANKVTGKTPAPPAGP</original>
    <variation>PPSPTQCSLTASPTHSTWRSSKPRFPVPRTFTPPCWTVPTRSRARHPHHLLALGALCEVGDREWGRQWLVGGVQRE</variation>
    <location>
        <begin position="121"/>
        <end position="196"/>
    </location>
</feature>
<feature type="splice variant" id="VSP_056134" description="In isoform 2." evidence="7">
    <location>
        <begin position="197"/>
        <end position="200"/>
    </location>
</feature>
<feature type="helix" evidence="10">
    <location>
        <begin position="56"/>
        <end position="89"/>
    </location>
</feature>
<feature type="helix" evidence="10">
    <location>
        <begin position="102"/>
        <end position="135"/>
    </location>
</feature>
<feature type="helix" evidence="10">
    <location>
        <begin position="157"/>
        <end position="185"/>
    </location>
</feature>